<accession>P0C574</accession>
<reference key="1">
    <citation type="journal article" date="2005" name="Nature">
        <title>Characterization of the 1918 influenza virus polymerase genes.</title>
        <authorList>
            <person name="Taubenberger J.K."/>
            <person name="Reid A.H."/>
            <person name="Lourens R.M."/>
            <person name="Wang R."/>
            <person name="Jin G."/>
            <person name="Fanning T.G."/>
        </authorList>
    </citation>
    <scope>NUCLEOTIDE SEQUENCE [MRNA]</scope>
</reference>
<reference key="2">
    <citation type="journal article" date="2007" name="PLoS Pathog.">
        <title>A single mutation in the PB1-F2 of H5N1 (HK/97) and 1918 Influenza A viruses contributes to increased virulence.</title>
        <authorList>
            <person name="Conenello G.M."/>
            <person name="Zamarin D."/>
            <person name="Perrone L.A."/>
            <person name="Tumpey T."/>
            <person name="Palese P."/>
        </authorList>
    </citation>
    <scope>MUTAGENESIS OF SER-66</scope>
</reference>
<reference key="3">
    <citation type="journal article" date="2007" name="Cell Host Microbe">
        <title>Expression of the 1918 Influenza A virus PB1-F2 enhances the pathogenesis of viral and secondary bacterial pneumonia.</title>
        <authorList>
            <person name="McAuley J.L."/>
            <person name="Hornung F."/>
            <person name="Boyd K.L."/>
            <person name="Smith A.M."/>
            <person name="McKeon R."/>
            <person name="Bennick J."/>
            <person name="Yewdell J.W."/>
            <person name="McCullers J.A."/>
        </authorList>
    </citation>
    <scope>ROLE IN PATHOGENICITY</scope>
</reference>
<evidence type="ECO:0000255" key="1">
    <source>
        <dbReference type="HAMAP-Rule" id="MF_04064"/>
    </source>
</evidence>
<evidence type="ECO:0000256" key="2">
    <source>
        <dbReference type="SAM" id="MobiDB-lite"/>
    </source>
</evidence>
<evidence type="ECO:0000269" key="3">
    <source>
    </source>
</evidence>
<proteinExistence type="evidence at protein level"/>
<organismHost>
    <name type="scientific">Aves</name>
    <dbReference type="NCBI Taxonomy" id="8782"/>
</organismHost>
<organismHost>
    <name type="scientific">Homo sapiens</name>
    <name type="common">Human</name>
    <dbReference type="NCBI Taxonomy" id="9606"/>
</organismHost>
<organismHost>
    <name type="scientific">Sus scrofa</name>
    <name type="common">Pig</name>
    <dbReference type="NCBI Taxonomy" id="9823"/>
</organismHost>
<gene>
    <name evidence="1" type="primary">PB1</name>
</gene>
<comment type="function">
    <text evidence="1">Plays an important role in promoting lung pathology in both primary viral infection and secondary bacterial infection. Promotes alteration of mitochondrial morphology, dissipation of mitochondrial membrane potential, and cell death. Alternatively, inhibits the production of interferon in the infected cell at the level of host mitochondrial antiviral signaling MAVS. Its level of expression differs greatly depending on which cell type is infected, in a manner that is independent of the levels of expression of other viral proteins. Monocytic cells are more affected than epithelial cells. Seems to disable virus-infected monocytes or other host innate immune cells. During early stage of infection, predisposes the mitochondria to permeability transition through interaction with host SLC25A6/ANT3 and VDAC1. These proteins participate in the formation of the permeability transition pore complex (PTPC) responsible of the release of mitochondrial products that triggers apoptosis.</text>
</comment>
<comment type="subunit">
    <text evidence="1">Oligomer. Interacts with human SLC25A6/ANT3 and VDAC1. Interacts with host MAVS.</text>
</comment>
<comment type="subcellular location">
    <subcellularLocation>
        <location evidence="1">Host mitochondrion inner membrane</location>
    </subcellularLocation>
    <subcellularLocation>
        <location evidence="1">Host nucleus</location>
    </subcellularLocation>
    <subcellularLocation>
        <location evidence="1">Host cytoplasm</location>
        <location evidence="1">Host cytosol</location>
    </subcellularLocation>
    <text evidence="1">Inner mitochondrial membrane in most cells types. Otherwise is detected in the nucleus and cytosol.</text>
</comment>
<comment type="miscellaneous">
    <text>Is not encoded in all strains, and seems to be dispensable for replication.</text>
</comment>
<comment type="miscellaneous">
    <text>South Carolina isolate has been sequenced from formalid fixed-lung tissues of a 21-year-old male which died in 1918 at Ft. Jackson, SC. Brevig Mission isolate has been sequenced from lung tissues of an Inuit woman buried in the permafrost in a gravesite near Brevig Mission, Alaska. This sample was recovered by John Hultin, retired pathologist.</text>
</comment>
<comment type="similarity">
    <text evidence="1">Belongs to the influenza viruses PB1-F2 family.</text>
</comment>
<name>PB1F2_I18A0</name>
<keyword id="KW-0053">Apoptosis</keyword>
<keyword id="KW-1035">Host cytoplasm</keyword>
<keyword id="KW-1043">Host membrane</keyword>
<keyword id="KW-1045">Host mitochondrion</keyword>
<keyword id="KW-1046">Host mitochondrion inner membrane</keyword>
<keyword id="KW-1048">Host nucleus</keyword>
<keyword id="KW-0945">Host-virus interaction</keyword>
<keyword id="KW-1090">Inhibition of host innate immune response by virus</keyword>
<keyword id="KW-1097">Inhibition of host MAVS by virus</keyword>
<keyword id="KW-1113">Inhibition of host RLR pathway by virus</keyword>
<keyword id="KW-0472">Membrane</keyword>
<keyword id="KW-1119">Modulation of host cell apoptosis by virus</keyword>
<keyword id="KW-0899">Viral immunoevasion</keyword>
<dbReference type="EMBL" id="DQ208310">
    <property type="status" value="NOT_ANNOTATED_CDS"/>
    <property type="molecule type" value="mRNA"/>
</dbReference>
<dbReference type="SMR" id="P0C574"/>
<dbReference type="Proteomes" id="UP000008430">
    <property type="component" value="Genome"/>
</dbReference>
<dbReference type="GO" id="GO:0044164">
    <property type="term" value="C:host cell cytosol"/>
    <property type="evidence" value="ECO:0007669"/>
    <property type="project" value="UniProtKB-SubCell"/>
</dbReference>
<dbReference type="GO" id="GO:0044192">
    <property type="term" value="C:host cell mitochondrial inner membrane"/>
    <property type="evidence" value="ECO:0007669"/>
    <property type="project" value="UniProtKB-SubCell"/>
</dbReference>
<dbReference type="GO" id="GO:0042025">
    <property type="term" value="C:host cell nucleus"/>
    <property type="evidence" value="ECO:0007669"/>
    <property type="project" value="UniProtKB-SubCell"/>
</dbReference>
<dbReference type="GO" id="GO:0016020">
    <property type="term" value="C:membrane"/>
    <property type="evidence" value="ECO:0007669"/>
    <property type="project" value="UniProtKB-UniRule"/>
</dbReference>
<dbReference type="GO" id="GO:0052150">
    <property type="term" value="P:symbiont-mediated perturbation of host apoptosis"/>
    <property type="evidence" value="ECO:0007669"/>
    <property type="project" value="UniProtKB-KW"/>
</dbReference>
<dbReference type="GO" id="GO:0039545">
    <property type="term" value="P:symbiont-mediated suppression of host cytoplasmic pattern recognition receptor signaling pathway via inhibition of MAVS activity"/>
    <property type="evidence" value="ECO:0000250"/>
    <property type="project" value="UniProtKB"/>
</dbReference>
<dbReference type="HAMAP" id="MF_04064">
    <property type="entry name" value="INFV_PB1F2"/>
    <property type="match status" value="1"/>
</dbReference>
<dbReference type="InterPro" id="IPR021045">
    <property type="entry name" value="Flu_proapoptotic_PB1-F2"/>
</dbReference>
<dbReference type="Pfam" id="PF11986">
    <property type="entry name" value="PB1-F2"/>
    <property type="match status" value="1"/>
</dbReference>
<organism>
    <name type="scientific">Influenza A virus (strain A/Brevig Mission/1/1918 H1N1)</name>
    <name type="common">Influenza A virus (strain A/South Carolina/1/1918 H1N1)</name>
    <dbReference type="NCBI Taxonomy" id="88776"/>
    <lineage>
        <taxon>Viruses</taxon>
        <taxon>Riboviria</taxon>
        <taxon>Orthornavirae</taxon>
        <taxon>Negarnaviricota</taxon>
        <taxon>Polyploviricotina</taxon>
        <taxon>Insthoviricetes</taxon>
        <taxon>Articulavirales</taxon>
        <taxon>Orthomyxoviridae</taxon>
        <taxon>Alphainfluenzavirus</taxon>
        <taxon>Alphainfluenzavirus influenzae</taxon>
        <taxon>Influenza A virus</taxon>
    </lineage>
</organism>
<feature type="chain" id="PRO_0000310572" description="Protein PB1-F2">
    <location>
        <begin position="1"/>
        <end position="90"/>
    </location>
</feature>
<feature type="region of interest" description="Disordered" evidence="2">
    <location>
        <begin position="1"/>
        <end position="34"/>
    </location>
</feature>
<feature type="region of interest" description="Mitochondrial targeting sequence" evidence="1">
    <location>
        <begin position="65"/>
        <end position="87"/>
    </location>
</feature>
<feature type="compositionally biased region" description="Basic and acidic residues" evidence="2">
    <location>
        <begin position="19"/>
        <end position="34"/>
    </location>
</feature>
<feature type="site" description="High pathogenicity" evidence="1">
    <location>
        <position position="66"/>
    </location>
</feature>
<feature type="site" description="Important for pathogenicity, S is highly pathogenic whereas N is low pathogenic">
    <location>
        <position position="66"/>
    </location>
</feature>
<feature type="mutagenesis site" description="Reduces 50% lethal dose by 3-log in mice." evidence="3">
    <original>S</original>
    <variation>N</variation>
    <location>
        <position position="66"/>
    </location>
</feature>
<sequence>MGQEQDTPWILSTGHISTQKREDGQQTPRLEHHNSTRLMDHCQKTMNQVVMPKQIVYWKQWLSLRSPTPVSLKTRVLKRWRLFSKHEWTS</sequence>
<protein>
    <recommendedName>
        <fullName evidence="1">Protein PB1-F2</fullName>
    </recommendedName>
</protein>